<evidence type="ECO:0000255" key="1">
    <source>
        <dbReference type="HAMAP-Rule" id="MF_01366"/>
    </source>
</evidence>
<evidence type="ECO:0000305" key="2"/>
<organism>
    <name type="scientific">Mycoplasma mycoides subsp. mycoides SC (strain CCUG 32753 / NCTC 10114 / PG1)</name>
    <dbReference type="NCBI Taxonomy" id="272632"/>
    <lineage>
        <taxon>Bacteria</taxon>
        <taxon>Bacillati</taxon>
        <taxon>Mycoplasmatota</taxon>
        <taxon>Mollicutes</taxon>
        <taxon>Mycoplasmataceae</taxon>
        <taxon>Mycoplasma</taxon>
    </lineage>
</organism>
<name>RL13_MYCMS</name>
<protein>
    <recommendedName>
        <fullName evidence="1">Large ribosomal subunit protein uL13</fullName>
    </recommendedName>
    <alternativeName>
        <fullName evidence="2">50S ribosomal protein L13</fullName>
    </alternativeName>
</protein>
<gene>
    <name evidence="1" type="primary">rplM</name>
    <name type="ordered locus">MSC_0713</name>
</gene>
<proteinExistence type="inferred from homology"/>
<feature type="chain" id="PRO_1000055414" description="Large ribosomal subunit protein uL13">
    <location>
        <begin position="1"/>
        <end position="151"/>
    </location>
</feature>
<accession>Q6MSQ6</accession>
<keyword id="KW-1185">Reference proteome</keyword>
<keyword id="KW-0687">Ribonucleoprotein</keyword>
<keyword id="KW-0689">Ribosomal protein</keyword>
<sequence length="151" mass="17130">MKQTTMISAKDTNKKWYIVDAENKTVGRLATQVALVLRGKHKVDFTPHINNGDHVIIINAEKAIFSGKKESNKFYYHHSMHPGGLKKRSVEVQRELDATKILERAIRLMLPKNVQGSNQYRALHVFKGSNHPFAAQKPEVLEISTKKGDVK</sequence>
<comment type="function">
    <text evidence="1">This protein is one of the early assembly proteins of the 50S ribosomal subunit, although it is not seen to bind rRNA by itself. It is important during the early stages of 50S assembly.</text>
</comment>
<comment type="subunit">
    <text evidence="1">Part of the 50S ribosomal subunit.</text>
</comment>
<comment type="similarity">
    <text evidence="1">Belongs to the universal ribosomal protein uL13 family.</text>
</comment>
<reference key="1">
    <citation type="journal article" date="2004" name="Genome Res.">
        <title>The genome sequence of Mycoplasma mycoides subsp. mycoides SC type strain PG1T, the causative agent of contagious bovine pleuropneumonia (CBPP).</title>
        <authorList>
            <person name="Westberg J."/>
            <person name="Persson A."/>
            <person name="Holmberg A."/>
            <person name="Goesmann A."/>
            <person name="Lundeberg J."/>
            <person name="Johansson K.-E."/>
            <person name="Pettersson B."/>
            <person name="Uhlen M."/>
        </authorList>
    </citation>
    <scope>NUCLEOTIDE SEQUENCE [LARGE SCALE GENOMIC DNA]</scope>
    <source>
        <strain>CCUG 32753 / NCTC 10114 / PG1</strain>
    </source>
</reference>
<dbReference type="EMBL" id="BX293980">
    <property type="protein sequence ID" value="CAE77332.1"/>
    <property type="molecule type" value="Genomic_DNA"/>
</dbReference>
<dbReference type="RefSeq" id="NP_975690.1">
    <property type="nucleotide sequence ID" value="NC_005364.2"/>
</dbReference>
<dbReference type="RefSeq" id="WP_011166883.1">
    <property type="nucleotide sequence ID" value="NC_005364.2"/>
</dbReference>
<dbReference type="SMR" id="Q6MSQ6"/>
<dbReference type="STRING" id="272632.MSC_0713"/>
<dbReference type="KEGG" id="mmy:MSC_0713"/>
<dbReference type="PATRIC" id="fig|272632.4.peg.767"/>
<dbReference type="eggNOG" id="COG0102">
    <property type="taxonomic scope" value="Bacteria"/>
</dbReference>
<dbReference type="HOGENOM" id="CLU_082184_2_2_14"/>
<dbReference type="Proteomes" id="UP000001016">
    <property type="component" value="Chromosome"/>
</dbReference>
<dbReference type="GO" id="GO:0022625">
    <property type="term" value="C:cytosolic large ribosomal subunit"/>
    <property type="evidence" value="ECO:0007669"/>
    <property type="project" value="TreeGrafter"/>
</dbReference>
<dbReference type="GO" id="GO:0003729">
    <property type="term" value="F:mRNA binding"/>
    <property type="evidence" value="ECO:0007669"/>
    <property type="project" value="TreeGrafter"/>
</dbReference>
<dbReference type="GO" id="GO:0003735">
    <property type="term" value="F:structural constituent of ribosome"/>
    <property type="evidence" value="ECO:0007669"/>
    <property type="project" value="InterPro"/>
</dbReference>
<dbReference type="GO" id="GO:0017148">
    <property type="term" value="P:negative regulation of translation"/>
    <property type="evidence" value="ECO:0007669"/>
    <property type="project" value="TreeGrafter"/>
</dbReference>
<dbReference type="GO" id="GO:0006412">
    <property type="term" value="P:translation"/>
    <property type="evidence" value="ECO:0007669"/>
    <property type="project" value="UniProtKB-UniRule"/>
</dbReference>
<dbReference type="CDD" id="cd00392">
    <property type="entry name" value="Ribosomal_L13"/>
    <property type="match status" value="1"/>
</dbReference>
<dbReference type="Gene3D" id="3.90.1180.10">
    <property type="entry name" value="Ribosomal protein L13"/>
    <property type="match status" value="1"/>
</dbReference>
<dbReference type="HAMAP" id="MF_01366">
    <property type="entry name" value="Ribosomal_uL13"/>
    <property type="match status" value="1"/>
</dbReference>
<dbReference type="InterPro" id="IPR005822">
    <property type="entry name" value="Ribosomal_uL13"/>
</dbReference>
<dbReference type="InterPro" id="IPR005823">
    <property type="entry name" value="Ribosomal_uL13_bac-type"/>
</dbReference>
<dbReference type="InterPro" id="IPR036899">
    <property type="entry name" value="Ribosomal_uL13_sf"/>
</dbReference>
<dbReference type="NCBIfam" id="TIGR01066">
    <property type="entry name" value="rplM_bact"/>
    <property type="match status" value="1"/>
</dbReference>
<dbReference type="PANTHER" id="PTHR11545:SF2">
    <property type="entry name" value="LARGE RIBOSOMAL SUBUNIT PROTEIN UL13M"/>
    <property type="match status" value="1"/>
</dbReference>
<dbReference type="PANTHER" id="PTHR11545">
    <property type="entry name" value="RIBOSOMAL PROTEIN L13"/>
    <property type="match status" value="1"/>
</dbReference>
<dbReference type="Pfam" id="PF00572">
    <property type="entry name" value="Ribosomal_L13"/>
    <property type="match status" value="1"/>
</dbReference>
<dbReference type="PIRSF" id="PIRSF002181">
    <property type="entry name" value="Ribosomal_L13"/>
    <property type="match status" value="1"/>
</dbReference>
<dbReference type="SUPFAM" id="SSF52161">
    <property type="entry name" value="Ribosomal protein L13"/>
    <property type="match status" value="1"/>
</dbReference>